<name>NDUS8_NEUCR</name>
<protein>
    <recommendedName>
        <fullName>NADH-ubiquinone oxidoreductase 23 kDa subunit, mitochondrial</fullName>
        <ecNumber>7.1.1.2</ecNumber>
    </recommendedName>
    <alternativeName>
        <fullName>Complex I-23kD</fullName>
        <shortName>CI-23kD</shortName>
    </alternativeName>
</protein>
<keyword id="KW-0004">4Fe-4S</keyword>
<keyword id="KW-0249">Electron transport</keyword>
<keyword id="KW-0408">Iron</keyword>
<keyword id="KW-0411">Iron-sulfur</keyword>
<keyword id="KW-0479">Metal-binding</keyword>
<keyword id="KW-0496">Mitochondrion</keyword>
<keyword id="KW-0520">NAD</keyword>
<keyword id="KW-0560">Oxidoreductase</keyword>
<keyword id="KW-1185">Reference proteome</keyword>
<keyword id="KW-0677">Repeat</keyword>
<keyword id="KW-0679">Respiratory chain</keyword>
<keyword id="KW-0809">Transit peptide</keyword>
<keyword id="KW-1278">Translocase</keyword>
<keyword id="KW-0813">Transport</keyword>
<keyword id="KW-0830">Ubiquinone</keyword>
<sequence length="219" mass="24902">MLTTTASSAAAVARQLTTRRVIAPSFVSQAIRTYATPAGPPPKGFRIPTPKTWDQEEEHVLDKNGRYFLLTEMFRGMYVAMEQFFRPPYTIYYPFEKGPISPRFRGEHALRRYPSGEERCIACKLCEAVCPAQAITIEAEERADGSRRTTRYDIDMTKCIYCGFCQESCPVDAIVESPNAEYATETREELLYNKEKLLSNGDKWEPELAAAIRADSPYR</sequence>
<comment type="function">
    <text>Core subunit of the mitochondrial membrane respiratory chain NADH dehydrogenase (Complex I) that is believed to belong to the minimal assembly required for catalysis. Complex I functions in the transfer of electrons from NADH to the respiratory chain. The immediate electron acceptor for the enzyme is believed to be ubiquinone. May donate electrons to ubiquinone.</text>
</comment>
<comment type="catalytic activity">
    <reaction>
        <text>a ubiquinone + NADH + 5 H(+)(in) = a ubiquinol + NAD(+) + 4 H(+)(out)</text>
        <dbReference type="Rhea" id="RHEA:29091"/>
        <dbReference type="Rhea" id="RHEA-COMP:9565"/>
        <dbReference type="Rhea" id="RHEA-COMP:9566"/>
        <dbReference type="ChEBI" id="CHEBI:15378"/>
        <dbReference type="ChEBI" id="CHEBI:16389"/>
        <dbReference type="ChEBI" id="CHEBI:17976"/>
        <dbReference type="ChEBI" id="CHEBI:57540"/>
        <dbReference type="ChEBI" id="CHEBI:57945"/>
        <dbReference type="EC" id="7.1.1.2"/>
    </reaction>
</comment>
<comment type="cofactor">
    <cofactor evidence="1">
        <name>[4Fe-4S] cluster</name>
        <dbReference type="ChEBI" id="CHEBI:49883"/>
    </cofactor>
    <text evidence="1">Binds 2 [4Fe-4S] clusters per subunit.</text>
</comment>
<comment type="subunit">
    <text>Complex I is composed of about 40 different subunits.</text>
</comment>
<comment type="subcellular location">
    <subcellularLocation>
        <location>Mitochondrion</location>
    </subcellularLocation>
</comment>
<comment type="similarity">
    <text evidence="2">Belongs to the complex I 23 kDa subunit family.</text>
</comment>
<dbReference type="EC" id="7.1.1.2"/>
<dbReference type="EMBL" id="X95547">
    <property type="protein sequence ID" value="CAA64794.1"/>
    <property type="molecule type" value="mRNA"/>
</dbReference>
<dbReference type="EMBL" id="CM002241">
    <property type="protein sequence ID" value="ESA42320.1"/>
    <property type="molecule type" value="Genomic_DNA"/>
</dbReference>
<dbReference type="EMBL" id="CM002241">
    <property type="protein sequence ID" value="ESA42321.1"/>
    <property type="molecule type" value="Genomic_DNA"/>
</dbReference>
<dbReference type="RefSeq" id="XP_011394933.1">
    <property type="nucleotide sequence ID" value="XM_011396631.1"/>
</dbReference>
<dbReference type="RefSeq" id="XP_011394934.1">
    <property type="nucleotide sequence ID" value="XM_011396632.1"/>
</dbReference>
<dbReference type="SMR" id="Q12644"/>
<dbReference type="STRING" id="367110.Q12644"/>
<dbReference type="TCDB" id="3.D.1.6.2">
    <property type="family name" value="the h+ or na+-translocating nadh dehydrogenase (ndh) family"/>
</dbReference>
<dbReference type="PaxDb" id="5141-EFNCRP00000001567"/>
<dbReference type="EnsemblFungi" id="ESA42320">
    <property type="protein sequence ID" value="ESA42320"/>
    <property type="gene ID" value="NCU05009"/>
</dbReference>
<dbReference type="EnsemblFungi" id="ESA42321">
    <property type="protein sequence ID" value="ESA42321"/>
    <property type="gene ID" value="NCU05009"/>
</dbReference>
<dbReference type="GeneID" id="3872083"/>
<dbReference type="KEGG" id="ncr:NCU05009"/>
<dbReference type="VEuPathDB" id="FungiDB:NCU05009"/>
<dbReference type="HOGENOM" id="CLU_067218_0_1_1"/>
<dbReference type="InParanoid" id="Q12644"/>
<dbReference type="OrthoDB" id="204405at2759"/>
<dbReference type="Proteomes" id="UP000001805">
    <property type="component" value="Chromosome 5, Linkage Group VI"/>
</dbReference>
<dbReference type="GO" id="GO:0005739">
    <property type="term" value="C:mitochondrion"/>
    <property type="evidence" value="ECO:0007669"/>
    <property type="project" value="UniProtKB-SubCell"/>
</dbReference>
<dbReference type="GO" id="GO:0045271">
    <property type="term" value="C:respiratory chain complex I"/>
    <property type="evidence" value="ECO:0000318"/>
    <property type="project" value="GO_Central"/>
</dbReference>
<dbReference type="GO" id="GO:0051539">
    <property type="term" value="F:4 iron, 4 sulfur cluster binding"/>
    <property type="evidence" value="ECO:0007669"/>
    <property type="project" value="UniProtKB-KW"/>
</dbReference>
<dbReference type="GO" id="GO:0046872">
    <property type="term" value="F:metal ion binding"/>
    <property type="evidence" value="ECO:0007669"/>
    <property type="project" value="UniProtKB-KW"/>
</dbReference>
<dbReference type="GO" id="GO:0008137">
    <property type="term" value="F:NADH dehydrogenase (ubiquinone) activity"/>
    <property type="evidence" value="ECO:0007669"/>
    <property type="project" value="UniProtKB-EC"/>
</dbReference>
<dbReference type="GO" id="GO:0006120">
    <property type="term" value="P:mitochondrial electron transport, NADH to ubiquinone"/>
    <property type="evidence" value="ECO:0000318"/>
    <property type="project" value="GO_Central"/>
</dbReference>
<dbReference type="GO" id="GO:0032981">
    <property type="term" value="P:mitochondrial respiratory chain complex I assembly"/>
    <property type="evidence" value="ECO:0000318"/>
    <property type="project" value="GO_Central"/>
</dbReference>
<dbReference type="FunFam" id="3.30.70.3270:FF:000001">
    <property type="entry name" value="NADH-quinone oxidoreductase subunit I 1"/>
    <property type="match status" value="1"/>
</dbReference>
<dbReference type="Gene3D" id="3.30.70.3270">
    <property type="match status" value="1"/>
</dbReference>
<dbReference type="HAMAP" id="MF_01351">
    <property type="entry name" value="NDH1_NuoI"/>
    <property type="match status" value="1"/>
</dbReference>
<dbReference type="InterPro" id="IPR017896">
    <property type="entry name" value="4Fe4S_Fe-S-bd"/>
</dbReference>
<dbReference type="InterPro" id="IPR017900">
    <property type="entry name" value="4Fe4S_Fe_S_CS"/>
</dbReference>
<dbReference type="InterPro" id="IPR010226">
    <property type="entry name" value="NADH_quinone_OxRdtase_chainI"/>
</dbReference>
<dbReference type="NCBIfam" id="TIGR01971">
    <property type="entry name" value="NuoI"/>
    <property type="match status" value="1"/>
</dbReference>
<dbReference type="NCBIfam" id="NF004538">
    <property type="entry name" value="PRK05888.1-4"/>
    <property type="match status" value="1"/>
</dbReference>
<dbReference type="NCBIfam" id="NF004539">
    <property type="entry name" value="PRK05888.1-5"/>
    <property type="match status" value="1"/>
</dbReference>
<dbReference type="PANTHER" id="PTHR10849:SF20">
    <property type="entry name" value="NADH DEHYDROGENASE [UBIQUINONE] IRON-SULFUR PROTEIN 8, MITOCHONDRIAL"/>
    <property type="match status" value="1"/>
</dbReference>
<dbReference type="PANTHER" id="PTHR10849">
    <property type="entry name" value="NADH DEHYDROGENASE UBIQUINONE IRON-SULFUR PROTEIN 8, MITOCHONDRIAL"/>
    <property type="match status" value="1"/>
</dbReference>
<dbReference type="Pfam" id="PF12838">
    <property type="entry name" value="Fer4_7"/>
    <property type="match status" value="1"/>
</dbReference>
<dbReference type="SUPFAM" id="SSF54862">
    <property type="entry name" value="4Fe-4S ferredoxins"/>
    <property type="match status" value="1"/>
</dbReference>
<dbReference type="PROSITE" id="PS00198">
    <property type="entry name" value="4FE4S_FER_1"/>
    <property type="match status" value="2"/>
</dbReference>
<dbReference type="PROSITE" id="PS51379">
    <property type="entry name" value="4FE4S_FER_2"/>
    <property type="match status" value="2"/>
</dbReference>
<gene>
    <name type="primary">nuo21.3c</name>
    <name type="ORF">NCU05009</name>
</gene>
<reference key="1">
    <citation type="journal article" date="1996" name="Biochim. Biophys. Acta">
        <title>Primary structure of a ferredoxin-like iron-sulfur subunit of complex I from Neurospora crassa.</title>
        <authorList>
            <person name="Duarte M."/>
            <person name="Finel M."/>
            <person name="Videira A."/>
        </authorList>
    </citation>
    <scope>NUCLEOTIDE SEQUENCE [MRNA]</scope>
</reference>
<reference key="2">
    <citation type="journal article" date="2003" name="Nature">
        <title>The genome sequence of the filamentous fungus Neurospora crassa.</title>
        <authorList>
            <person name="Galagan J.E."/>
            <person name="Calvo S.E."/>
            <person name="Borkovich K.A."/>
            <person name="Selker E.U."/>
            <person name="Read N.D."/>
            <person name="Jaffe D.B."/>
            <person name="FitzHugh W."/>
            <person name="Ma L.-J."/>
            <person name="Smirnov S."/>
            <person name="Purcell S."/>
            <person name="Rehman B."/>
            <person name="Elkins T."/>
            <person name="Engels R."/>
            <person name="Wang S."/>
            <person name="Nielsen C.B."/>
            <person name="Butler J."/>
            <person name="Endrizzi M."/>
            <person name="Qui D."/>
            <person name="Ianakiev P."/>
            <person name="Bell-Pedersen D."/>
            <person name="Nelson M.A."/>
            <person name="Werner-Washburne M."/>
            <person name="Selitrennikoff C.P."/>
            <person name="Kinsey J.A."/>
            <person name="Braun E.L."/>
            <person name="Zelter A."/>
            <person name="Schulte U."/>
            <person name="Kothe G.O."/>
            <person name="Jedd G."/>
            <person name="Mewes H.-W."/>
            <person name="Staben C."/>
            <person name="Marcotte E."/>
            <person name="Greenberg D."/>
            <person name="Roy A."/>
            <person name="Foley K."/>
            <person name="Naylor J."/>
            <person name="Stange-Thomann N."/>
            <person name="Barrett R."/>
            <person name="Gnerre S."/>
            <person name="Kamal M."/>
            <person name="Kamvysselis M."/>
            <person name="Mauceli E.W."/>
            <person name="Bielke C."/>
            <person name="Rudd S."/>
            <person name="Frishman D."/>
            <person name="Krystofova S."/>
            <person name="Rasmussen C."/>
            <person name="Metzenberg R.L."/>
            <person name="Perkins D.D."/>
            <person name="Kroken S."/>
            <person name="Cogoni C."/>
            <person name="Macino G."/>
            <person name="Catcheside D.E.A."/>
            <person name="Li W."/>
            <person name="Pratt R.J."/>
            <person name="Osmani S.A."/>
            <person name="DeSouza C.P.C."/>
            <person name="Glass N.L."/>
            <person name="Orbach M.J."/>
            <person name="Berglund J.A."/>
            <person name="Voelker R."/>
            <person name="Yarden O."/>
            <person name="Plamann M."/>
            <person name="Seiler S."/>
            <person name="Dunlap J.C."/>
            <person name="Radford A."/>
            <person name="Aramayo R."/>
            <person name="Natvig D.O."/>
            <person name="Alex L.A."/>
            <person name="Mannhaupt G."/>
            <person name="Ebbole D.J."/>
            <person name="Freitag M."/>
            <person name="Paulsen I."/>
            <person name="Sachs M.S."/>
            <person name="Lander E.S."/>
            <person name="Nusbaum C."/>
            <person name="Birren B.W."/>
        </authorList>
    </citation>
    <scope>NUCLEOTIDE SEQUENCE [LARGE SCALE GENOMIC DNA]</scope>
    <source>
        <strain>ATCC 24698 / 74-OR23-1A / CBS 708.71 / DSM 1257 / FGSC 987</strain>
    </source>
</reference>
<proteinExistence type="evidence at transcript level"/>
<feature type="transit peptide" description="Mitochondrion">
    <location>
        <begin position="1"/>
        <end status="unknown"/>
    </location>
</feature>
<feature type="chain" id="PRO_0000020010" description="NADH-ubiquinone oxidoreductase 23 kDa subunit, mitochondrial">
    <location>
        <begin status="unknown"/>
        <end position="219"/>
    </location>
</feature>
<feature type="domain" description="4Fe-4S ferredoxin-type 1">
    <location>
        <begin position="111"/>
        <end position="140"/>
    </location>
</feature>
<feature type="domain" description="4Fe-4S ferredoxin-type 2">
    <location>
        <begin position="150"/>
        <end position="179"/>
    </location>
</feature>
<feature type="binding site" evidence="1">
    <location>
        <position position="120"/>
    </location>
    <ligand>
        <name>[4Fe-4S] cluster</name>
        <dbReference type="ChEBI" id="CHEBI:49883"/>
        <label>1</label>
    </ligand>
</feature>
<feature type="binding site" evidence="1">
    <location>
        <position position="123"/>
    </location>
    <ligand>
        <name>[4Fe-4S] cluster</name>
        <dbReference type="ChEBI" id="CHEBI:49883"/>
        <label>1</label>
    </ligand>
</feature>
<feature type="binding site" evidence="1">
    <location>
        <position position="126"/>
    </location>
    <ligand>
        <name>[4Fe-4S] cluster</name>
        <dbReference type="ChEBI" id="CHEBI:49883"/>
        <label>1</label>
    </ligand>
</feature>
<feature type="binding site" evidence="1">
    <location>
        <position position="130"/>
    </location>
    <ligand>
        <name>[4Fe-4S] cluster</name>
        <dbReference type="ChEBI" id="CHEBI:49883"/>
        <label>2</label>
    </ligand>
</feature>
<feature type="binding site" evidence="1">
    <location>
        <position position="159"/>
    </location>
    <ligand>
        <name>[4Fe-4S] cluster</name>
        <dbReference type="ChEBI" id="CHEBI:49883"/>
        <label>2</label>
    </ligand>
</feature>
<feature type="binding site" evidence="1">
    <location>
        <position position="162"/>
    </location>
    <ligand>
        <name>[4Fe-4S] cluster</name>
        <dbReference type="ChEBI" id="CHEBI:49883"/>
        <label>2</label>
    </ligand>
</feature>
<feature type="binding site" evidence="1">
    <location>
        <position position="165"/>
    </location>
    <ligand>
        <name>[4Fe-4S] cluster</name>
        <dbReference type="ChEBI" id="CHEBI:49883"/>
        <label>2</label>
    </ligand>
</feature>
<feature type="binding site" evidence="1">
    <location>
        <position position="169"/>
    </location>
    <ligand>
        <name>[4Fe-4S] cluster</name>
        <dbReference type="ChEBI" id="CHEBI:49883"/>
        <label>1</label>
    </ligand>
</feature>
<accession>Q12644</accession>
<accession>Q7RV45</accession>
<accession>V5INI7</accession>
<organism>
    <name type="scientific">Neurospora crassa (strain ATCC 24698 / 74-OR23-1A / CBS 708.71 / DSM 1257 / FGSC 987)</name>
    <dbReference type="NCBI Taxonomy" id="367110"/>
    <lineage>
        <taxon>Eukaryota</taxon>
        <taxon>Fungi</taxon>
        <taxon>Dikarya</taxon>
        <taxon>Ascomycota</taxon>
        <taxon>Pezizomycotina</taxon>
        <taxon>Sordariomycetes</taxon>
        <taxon>Sordariomycetidae</taxon>
        <taxon>Sordariales</taxon>
        <taxon>Sordariaceae</taxon>
        <taxon>Neurospora</taxon>
    </lineage>
</organism>
<evidence type="ECO:0000250" key="1"/>
<evidence type="ECO:0000305" key="2"/>